<accession>Q56115</accession>
<protein>
    <recommendedName>
        <fullName>Aminopeptidase C</fullName>
        <ecNumber>3.4.22.40</ecNumber>
    </recommendedName>
    <alternativeName>
        <fullName>Bleomycin hydrolase</fullName>
    </alternativeName>
</protein>
<proteinExistence type="inferred from homology"/>
<organism>
    <name type="scientific">Streptococcus thermophilus</name>
    <dbReference type="NCBI Taxonomy" id="1308"/>
    <lineage>
        <taxon>Bacteria</taxon>
        <taxon>Bacillati</taxon>
        <taxon>Bacillota</taxon>
        <taxon>Bacilli</taxon>
        <taxon>Lactobacillales</taxon>
        <taxon>Streptococcaceae</taxon>
        <taxon>Streptococcus</taxon>
    </lineage>
</organism>
<dbReference type="EC" id="3.4.22.40"/>
<dbReference type="EMBL" id="Z30315">
    <property type="protein sequence ID" value="CAA82960.1"/>
    <property type="molecule type" value="Genomic_DNA"/>
</dbReference>
<dbReference type="PIR" id="S48143">
    <property type="entry name" value="S48143"/>
</dbReference>
<dbReference type="RefSeq" id="WP_014607929.1">
    <property type="nucleotide sequence ID" value="NZ_RIVR01000045.1"/>
</dbReference>
<dbReference type="SMR" id="Q56115"/>
<dbReference type="MEROPS" id="C01.086"/>
<dbReference type="eggNOG" id="COG3579">
    <property type="taxonomic scope" value="Bacteria"/>
</dbReference>
<dbReference type="GO" id="GO:0005737">
    <property type="term" value="C:cytoplasm"/>
    <property type="evidence" value="ECO:0007669"/>
    <property type="project" value="TreeGrafter"/>
</dbReference>
<dbReference type="GO" id="GO:0070005">
    <property type="term" value="F:cysteine-type aminopeptidase activity"/>
    <property type="evidence" value="ECO:0007669"/>
    <property type="project" value="InterPro"/>
</dbReference>
<dbReference type="GO" id="GO:0004197">
    <property type="term" value="F:cysteine-type endopeptidase activity"/>
    <property type="evidence" value="ECO:0007669"/>
    <property type="project" value="UniProtKB-EC"/>
</dbReference>
<dbReference type="GO" id="GO:0043418">
    <property type="term" value="P:homocysteine catabolic process"/>
    <property type="evidence" value="ECO:0007669"/>
    <property type="project" value="TreeGrafter"/>
</dbReference>
<dbReference type="GO" id="GO:0006508">
    <property type="term" value="P:proteolysis"/>
    <property type="evidence" value="ECO:0007669"/>
    <property type="project" value="UniProtKB-KW"/>
</dbReference>
<dbReference type="GO" id="GO:0009636">
    <property type="term" value="P:response to toxic substance"/>
    <property type="evidence" value="ECO:0007669"/>
    <property type="project" value="TreeGrafter"/>
</dbReference>
<dbReference type="CDD" id="cd00585">
    <property type="entry name" value="Peptidase_C1B"/>
    <property type="match status" value="1"/>
</dbReference>
<dbReference type="FunFam" id="3.90.70.10:FF:000091">
    <property type="entry name" value="Aminopeptidase C"/>
    <property type="match status" value="1"/>
</dbReference>
<dbReference type="Gene3D" id="3.90.70.10">
    <property type="entry name" value="Cysteine proteinases"/>
    <property type="match status" value="1"/>
</dbReference>
<dbReference type="InterPro" id="IPR038765">
    <property type="entry name" value="Papain-like_cys_pep_sf"/>
</dbReference>
<dbReference type="InterPro" id="IPR000169">
    <property type="entry name" value="Pept_cys_AS"/>
</dbReference>
<dbReference type="InterPro" id="IPR025660">
    <property type="entry name" value="Pept_his_AS"/>
</dbReference>
<dbReference type="InterPro" id="IPR004134">
    <property type="entry name" value="Peptidase_C1B"/>
</dbReference>
<dbReference type="PANTHER" id="PTHR10363">
    <property type="entry name" value="BLEOMYCIN HYDROLASE"/>
    <property type="match status" value="1"/>
</dbReference>
<dbReference type="PANTHER" id="PTHR10363:SF2">
    <property type="entry name" value="BLEOMYCIN HYDROLASE"/>
    <property type="match status" value="1"/>
</dbReference>
<dbReference type="Pfam" id="PF03051">
    <property type="entry name" value="Peptidase_C1_2"/>
    <property type="match status" value="1"/>
</dbReference>
<dbReference type="PIRSF" id="PIRSF005700">
    <property type="entry name" value="PepC"/>
    <property type="match status" value="1"/>
</dbReference>
<dbReference type="SUPFAM" id="SSF54001">
    <property type="entry name" value="Cysteine proteinases"/>
    <property type="match status" value="1"/>
</dbReference>
<dbReference type="PROSITE" id="PS00139">
    <property type="entry name" value="THIOL_PROTEASE_CYS"/>
    <property type="match status" value="1"/>
</dbReference>
<dbReference type="PROSITE" id="PS00639">
    <property type="entry name" value="THIOL_PROTEASE_HIS"/>
    <property type="match status" value="1"/>
</dbReference>
<evidence type="ECO:0000250" key="1"/>
<evidence type="ECO:0000255" key="2">
    <source>
        <dbReference type="PROSITE-ProRule" id="PRU10088"/>
    </source>
</evidence>
<evidence type="ECO:0000255" key="3">
    <source>
        <dbReference type="PROSITE-ProRule" id="PRU10089"/>
    </source>
</evidence>
<gene>
    <name type="primary">pepC</name>
</gene>
<name>PEPC_STRTR</name>
<sequence>MTSLSTDFTEKLFADYEANAKYGAIENAVTHNGLLKSIETRQSEVENDFVFSIDLTKDEVSNQKASGRCWMFAALNTFRHKLISDFKLESFELSQAHTFFWDKYEKSNWFLEQIIATADQEIGSRKVKFLLDTPQQDGGQWDMVVSLFEKYGVVPKSVYPESVASSNSRELNQYLNKLLRQDAQILRDLIASGADQAAVQAKKEEFLQEIFNYLAMTLGLPPRQFDFAYRDKDDNYRSEKGITPRAFFEKYVGLKLSDYVSVINAPTADKPYGKSYTVEMLGNVVGAPSVRYINLPMDRFKELAIAQMKAGESVWFGSDVGQVSDRQKGILATNVYDFTASMDINWTQDKAGRLDYSESLMTHAMVLTGVDLDADGKPIKWKIENSWGDKVGQKGYFVASDAWMDEYTYQIVVRKDFLTAEELAAYEADPQVLAPWDPMGSLASK</sequence>
<feature type="chain" id="PRO_0000050596" description="Aminopeptidase C">
    <location>
        <begin position="1"/>
        <end position="445"/>
    </location>
</feature>
<feature type="active site" evidence="1">
    <location>
        <position position="69"/>
    </location>
</feature>
<feature type="active site" evidence="1">
    <location>
        <position position="363"/>
    </location>
</feature>
<feature type="active site" evidence="1">
    <location>
        <position position="385"/>
    </location>
</feature>
<reference key="1">
    <citation type="journal article" date="1994" name="Eur. J. Biochem.">
        <title>Gene cloning and characterization of PepC, a cysteine aminopeptidase from Streptococcus thermophilus, with sequence similarity to the eucaryotic bleomycin hydrolase.</title>
        <authorList>
            <person name="Chapot-Chartier M.P."/>
            <person name="Rul F."/>
            <person name="Nardi M."/>
            <person name="Gripon J.-C."/>
        </authorList>
    </citation>
    <scope>NUCLEOTIDE SEQUENCE [GENOMIC DNA]</scope>
    <source>
        <strain>CNRZ 302</strain>
    </source>
</reference>
<keyword id="KW-0031">Aminopeptidase</keyword>
<keyword id="KW-0378">Hydrolase</keyword>
<keyword id="KW-0645">Protease</keyword>
<keyword id="KW-0788">Thiol protease</keyword>
<comment type="catalytic activity">
    <reaction>
        <text>Inactivates bleomycin B2 (a cytotoxic glycometallopeptide) by hydrolysis of a carboxyamide bond of beta-aminoalanine, but also shows general aminopeptidase activity. The specificity varies somewhat with source, but amino acid arylamides of Met, Leu and Ala are preferred.</text>
        <dbReference type="EC" id="3.4.22.40"/>
    </reaction>
</comment>
<comment type="subunit">
    <text evidence="1">Homohexamer.</text>
</comment>
<comment type="similarity">
    <text evidence="2 3">Belongs to the peptidase C1 family.</text>
</comment>